<name>RUVA_STRPF</name>
<accession>Q1J492</accession>
<evidence type="ECO:0000255" key="1">
    <source>
        <dbReference type="HAMAP-Rule" id="MF_00031"/>
    </source>
</evidence>
<sequence>MYDYIKGQLTKITAKYIVVEANGLGYMINVANPYSFTDSVNQLVTIYLHQVIREDAHLLFGFHTEDEKDVFLKLISVSGIGPTTALAIVAVDDNEGLVNAIDNSDIKYLMKFPKIGKKTAQQMVLDLAGKFVEAPQETGHTKARSNKAGNTQLDEAIEALLALGYKAKELKKIRAFFEGTSETAEQYIKSALKLLMKG</sequence>
<dbReference type="EMBL" id="CP000262">
    <property type="protein sequence ID" value="ABF38844.1"/>
    <property type="molecule type" value="Genomic_DNA"/>
</dbReference>
<dbReference type="SMR" id="Q1J492"/>
<dbReference type="KEGG" id="spi:MGAS10750_Spy1894"/>
<dbReference type="HOGENOM" id="CLU_087936_1_0_9"/>
<dbReference type="Proteomes" id="UP000002434">
    <property type="component" value="Chromosome"/>
</dbReference>
<dbReference type="GO" id="GO:0005737">
    <property type="term" value="C:cytoplasm"/>
    <property type="evidence" value="ECO:0007669"/>
    <property type="project" value="UniProtKB-SubCell"/>
</dbReference>
<dbReference type="GO" id="GO:0009379">
    <property type="term" value="C:Holliday junction helicase complex"/>
    <property type="evidence" value="ECO:0007669"/>
    <property type="project" value="InterPro"/>
</dbReference>
<dbReference type="GO" id="GO:0048476">
    <property type="term" value="C:Holliday junction resolvase complex"/>
    <property type="evidence" value="ECO:0007669"/>
    <property type="project" value="UniProtKB-UniRule"/>
</dbReference>
<dbReference type="GO" id="GO:0005524">
    <property type="term" value="F:ATP binding"/>
    <property type="evidence" value="ECO:0007669"/>
    <property type="project" value="InterPro"/>
</dbReference>
<dbReference type="GO" id="GO:0000400">
    <property type="term" value="F:four-way junction DNA binding"/>
    <property type="evidence" value="ECO:0007669"/>
    <property type="project" value="UniProtKB-UniRule"/>
</dbReference>
<dbReference type="GO" id="GO:0009378">
    <property type="term" value="F:four-way junction helicase activity"/>
    <property type="evidence" value="ECO:0007669"/>
    <property type="project" value="InterPro"/>
</dbReference>
<dbReference type="GO" id="GO:0006310">
    <property type="term" value="P:DNA recombination"/>
    <property type="evidence" value="ECO:0007669"/>
    <property type="project" value="UniProtKB-UniRule"/>
</dbReference>
<dbReference type="GO" id="GO:0006281">
    <property type="term" value="P:DNA repair"/>
    <property type="evidence" value="ECO:0007669"/>
    <property type="project" value="UniProtKB-UniRule"/>
</dbReference>
<dbReference type="CDD" id="cd14332">
    <property type="entry name" value="UBA_RuvA_C"/>
    <property type="match status" value="1"/>
</dbReference>
<dbReference type="Gene3D" id="1.10.150.20">
    <property type="entry name" value="5' to 3' exonuclease, C-terminal subdomain"/>
    <property type="match status" value="1"/>
</dbReference>
<dbReference type="Gene3D" id="1.10.8.10">
    <property type="entry name" value="DNA helicase RuvA subunit, C-terminal domain"/>
    <property type="match status" value="1"/>
</dbReference>
<dbReference type="Gene3D" id="2.40.50.140">
    <property type="entry name" value="Nucleic acid-binding proteins"/>
    <property type="match status" value="1"/>
</dbReference>
<dbReference type="HAMAP" id="MF_00031">
    <property type="entry name" value="DNA_HJ_migration_RuvA"/>
    <property type="match status" value="1"/>
</dbReference>
<dbReference type="InterPro" id="IPR013849">
    <property type="entry name" value="DNA_helicase_Holl-junc_RuvA_I"/>
</dbReference>
<dbReference type="InterPro" id="IPR003583">
    <property type="entry name" value="Hlx-hairpin-Hlx_DNA-bd_motif"/>
</dbReference>
<dbReference type="InterPro" id="IPR012340">
    <property type="entry name" value="NA-bd_OB-fold"/>
</dbReference>
<dbReference type="InterPro" id="IPR000085">
    <property type="entry name" value="RuvA"/>
</dbReference>
<dbReference type="InterPro" id="IPR010994">
    <property type="entry name" value="RuvA_2-like"/>
</dbReference>
<dbReference type="InterPro" id="IPR011114">
    <property type="entry name" value="RuvA_C"/>
</dbReference>
<dbReference type="InterPro" id="IPR036267">
    <property type="entry name" value="RuvA_C_sf"/>
</dbReference>
<dbReference type="NCBIfam" id="TIGR00084">
    <property type="entry name" value="ruvA"/>
    <property type="match status" value="1"/>
</dbReference>
<dbReference type="Pfam" id="PF14520">
    <property type="entry name" value="HHH_5"/>
    <property type="match status" value="1"/>
</dbReference>
<dbReference type="Pfam" id="PF07499">
    <property type="entry name" value="RuvA_C"/>
    <property type="match status" value="1"/>
</dbReference>
<dbReference type="Pfam" id="PF01330">
    <property type="entry name" value="RuvA_N"/>
    <property type="match status" value="1"/>
</dbReference>
<dbReference type="SMART" id="SM00278">
    <property type="entry name" value="HhH1"/>
    <property type="match status" value="2"/>
</dbReference>
<dbReference type="SUPFAM" id="SSF46929">
    <property type="entry name" value="DNA helicase RuvA subunit, C-terminal domain"/>
    <property type="match status" value="1"/>
</dbReference>
<dbReference type="SUPFAM" id="SSF50249">
    <property type="entry name" value="Nucleic acid-binding proteins"/>
    <property type="match status" value="1"/>
</dbReference>
<dbReference type="SUPFAM" id="SSF47781">
    <property type="entry name" value="RuvA domain 2-like"/>
    <property type="match status" value="1"/>
</dbReference>
<protein>
    <recommendedName>
        <fullName evidence="1">Holliday junction branch migration complex subunit RuvA</fullName>
    </recommendedName>
</protein>
<comment type="function">
    <text evidence="1">The RuvA-RuvB-RuvC complex processes Holliday junction (HJ) DNA during genetic recombination and DNA repair, while the RuvA-RuvB complex plays an important role in the rescue of blocked DNA replication forks via replication fork reversal (RFR). RuvA specifically binds to HJ cruciform DNA, conferring on it an open structure. The RuvB hexamer acts as an ATP-dependent pump, pulling dsDNA into and through the RuvAB complex. HJ branch migration allows RuvC to scan DNA until it finds its consensus sequence, where it cleaves and resolves the cruciform DNA.</text>
</comment>
<comment type="subunit">
    <text evidence="1">Homotetramer. Forms an RuvA(8)-RuvB(12)-Holliday junction (HJ) complex. HJ DNA is sandwiched between 2 RuvA tetramers; dsDNA enters through RuvA and exits via RuvB. An RuvB hexamer assembles on each DNA strand where it exits the tetramer. Each RuvB hexamer is contacted by two RuvA subunits (via domain III) on 2 adjacent RuvB subunits; this complex drives branch migration. In the full resolvosome a probable DNA-RuvA(4)-RuvB(12)-RuvC(2) complex forms which resolves the HJ.</text>
</comment>
<comment type="subcellular location">
    <subcellularLocation>
        <location evidence="1">Cytoplasm</location>
    </subcellularLocation>
</comment>
<comment type="domain">
    <text evidence="1">Has three domains with a flexible linker between the domains II and III and assumes an 'L' shape. Domain III is highly mobile and contacts RuvB.</text>
</comment>
<comment type="similarity">
    <text evidence="1">Belongs to the RuvA family.</text>
</comment>
<gene>
    <name evidence="1" type="primary">ruvA</name>
    <name type="ordered locus">MGAS10750_Spy1894</name>
</gene>
<reference key="1">
    <citation type="journal article" date="2006" name="Proc. Natl. Acad. Sci. U.S.A.">
        <title>Molecular genetic anatomy of inter- and intraserotype variation in the human bacterial pathogen group A Streptococcus.</title>
        <authorList>
            <person name="Beres S.B."/>
            <person name="Richter E.W."/>
            <person name="Nagiec M.J."/>
            <person name="Sumby P."/>
            <person name="Porcella S.F."/>
            <person name="DeLeo F.R."/>
            <person name="Musser J.M."/>
        </authorList>
    </citation>
    <scope>NUCLEOTIDE SEQUENCE [LARGE SCALE GENOMIC DNA]</scope>
    <source>
        <strain>MGAS10750</strain>
    </source>
</reference>
<organism>
    <name type="scientific">Streptococcus pyogenes serotype M4 (strain MGAS10750)</name>
    <dbReference type="NCBI Taxonomy" id="370554"/>
    <lineage>
        <taxon>Bacteria</taxon>
        <taxon>Bacillati</taxon>
        <taxon>Bacillota</taxon>
        <taxon>Bacilli</taxon>
        <taxon>Lactobacillales</taxon>
        <taxon>Streptococcaceae</taxon>
        <taxon>Streptococcus</taxon>
    </lineage>
</organism>
<keyword id="KW-0963">Cytoplasm</keyword>
<keyword id="KW-0227">DNA damage</keyword>
<keyword id="KW-0233">DNA recombination</keyword>
<keyword id="KW-0234">DNA repair</keyword>
<keyword id="KW-0238">DNA-binding</keyword>
<feature type="chain" id="PRO_1000002570" description="Holliday junction branch migration complex subunit RuvA">
    <location>
        <begin position="1"/>
        <end position="198"/>
    </location>
</feature>
<feature type="region of interest" description="Domain I" evidence="1">
    <location>
        <begin position="1"/>
        <end position="63"/>
    </location>
</feature>
<feature type="region of interest" description="Domain II" evidence="1">
    <location>
        <begin position="64"/>
        <end position="142"/>
    </location>
</feature>
<feature type="region of interest" description="Flexible linker" evidence="1">
    <location>
        <begin position="143"/>
        <end position="147"/>
    </location>
</feature>
<feature type="region of interest" description="Domain III" evidence="1">
    <location>
        <begin position="148"/>
        <end position="198"/>
    </location>
</feature>
<proteinExistence type="inferred from homology"/>